<name>ASTE_SHEB2</name>
<comment type="function">
    <text evidence="1">Transforms N(2)-succinylglutamate into succinate and glutamate.</text>
</comment>
<comment type="catalytic activity">
    <reaction evidence="1">
        <text>N-succinyl-L-glutamate + H2O = L-glutamate + succinate</text>
        <dbReference type="Rhea" id="RHEA:15169"/>
        <dbReference type="ChEBI" id="CHEBI:15377"/>
        <dbReference type="ChEBI" id="CHEBI:29985"/>
        <dbReference type="ChEBI" id="CHEBI:30031"/>
        <dbReference type="ChEBI" id="CHEBI:58763"/>
        <dbReference type="EC" id="3.5.1.96"/>
    </reaction>
</comment>
<comment type="cofactor">
    <cofactor evidence="1">
        <name>Zn(2+)</name>
        <dbReference type="ChEBI" id="CHEBI:29105"/>
    </cofactor>
    <text evidence="1">Binds 1 zinc ion per subunit.</text>
</comment>
<comment type="pathway">
    <text evidence="1">Amino-acid degradation; L-arginine degradation via AST pathway; L-glutamate and succinate from L-arginine: step 5/5.</text>
</comment>
<comment type="similarity">
    <text evidence="1">Belongs to the AspA/AstE family. Succinylglutamate desuccinylase subfamily.</text>
</comment>
<feature type="chain" id="PRO_1000148442" description="Succinylglutamate desuccinylase">
    <location>
        <begin position="1"/>
        <end position="344"/>
    </location>
</feature>
<feature type="active site" evidence="1">
    <location>
        <position position="224"/>
    </location>
</feature>
<feature type="binding site" evidence="1">
    <location>
        <position position="63"/>
    </location>
    <ligand>
        <name>Zn(2+)</name>
        <dbReference type="ChEBI" id="CHEBI:29105"/>
    </ligand>
</feature>
<feature type="binding site" evidence="1">
    <location>
        <position position="66"/>
    </location>
    <ligand>
        <name>Zn(2+)</name>
        <dbReference type="ChEBI" id="CHEBI:29105"/>
    </ligand>
</feature>
<feature type="binding site" evidence="1">
    <location>
        <position position="160"/>
    </location>
    <ligand>
        <name>Zn(2+)</name>
        <dbReference type="ChEBI" id="CHEBI:29105"/>
    </ligand>
</feature>
<evidence type="ECO:0000255" key="1">
    <source>
        <dbReference type="HAMAP-Rule" id="MF_00767"/>
    </source>
</evidence>
<accession>B8EEX7</accession>
<sequence>MLQALLDSKDFLALTLAHPEQFDGEFSFSLGDHTQVEVWDTGVIVFEPAQNEGKDVVLSCGVHGNETAPIELCNGLIKQLLQQKIIAKQRTLFLIGNPLAINNGTRIIDENMNRLFSGEHSNPPGLVNPERVRAKKLEAYIDRFYTAVADGRQRIHYDLHTAMRASKHEKFAIYPYRPGRAFSGEQIMFLAASGVDTVLFHHEPTTTFSYFSSERYGADAFTIELGKVYPMGQNDMTRFIATHEMFMRLITAKPLELDAFDADKVNLYQVCRVINKHFDDFEFTFATDVENFRSFPKGFVLAREGGQEIKVEHEFESVVFPNAKVPIGNRTVICLIPAVNADVR</sequence>
<reference key="1">
    <citation type="submission" date="2008-12" db="EMBL/GenBank/DDBJ databases">
        <title>Complete sequence of chromosome of Shewanella baltica OS223.</title>
        <authorList>
            <consortium name="US DOE Joint Genome Institute"/>
            <person name="Lucas S."/>
            <person name="Copeland A."/>
            <person name="Lapidus A."/>
            <person name="Glavina del Rio T."/>
            <person name="Dalin E."/>
            <person name="Tice H."/>
            <person name="Bruce D."/>
            <person name="Goodwin L."/>
            <person name="Pitluck S."/>
            <person name="Chertkov O."/>
            <person name="Meincke L."/>
            <person name="Brettin T."/>
            <person name="Detter J.C."/>
            <person name="Han C."/>
            <person name="Kuske C.R."/>
            <person name="Larimer F."/>
            <person name="Land M."/>
            <person name="Hauser L."/>
            <person name="Kyrpides N."/>
            <person name="Ovchinnikova G."/>
            <person name="Brettar I."/>
            <person name="Rodrigues J."/>
            <person name="Konstantinidis K."/>
            <person name="Tiedje J."/>
        </authorList>
    </citation>
    <scope>NUCLEOTIDE SEQUENCE [LARGE SCALE GENOMIC DNA]</scope>
    <source>
        <strain>OS223</strain>
    </source>
</reference>
<protein>
    <recommendedName>
        <fullName evidence="1">Succinylglutamate desuccinylase</fullName>
        <ecNumber evidence="1">3.5.1.96</ecNumber>
    </recommendedName>
</protein>
<keyword id="KW-0056">Arginine metabolism</keyword>
<keyword id="KW-0378">Hydrolase</keyword>
<keyword id="KW-0479">Metal-binding</keyword>
<keyword id="KW-0862">Zinc</keyword>
<organism>
    <name type="scientific">Shewanella baltica (strain OS223)</name>
    <dbReference type="NCBI Taxonomy" id="407976"/>
    <lineage>
        <taxon>Bacteria</taxon>
        <taxon>Pseudomonadati</taxon>
        <taxon>Pseudomonadota</taxon>
        <taxon>Gammaproteobacteria</taxon>
        <taxon>Alteromonadales</taxon>
        <taxon>Shewanellaceae</taxon>
        <taxon>Shewanella</taxon>
    </lineage>
</organism>
<proteinExistence type="inferred from homology"/>
<gene>
    <name evidence="1" type="primary">astE</name>
    <name type="ordered locus">Sbal223_2236</name>
</gene>
<dbReference type="EC" id="3.5.1.96" evidence="1"/>
<dbReference type="EMBL" id="CP001252">
    <property type="protein sequence ID" value="ACK46735.1"/>
    <property type="molecule type" value="Genomic_DNA"/>
</dbReference>
<dbReference type="RefSeq" id="WP_012089196.1">
    <property type="nucleotide sequence ID" value="NC_011663.1"/>
</dbReference>
<dbReference type="SMR" id="B8EEX7"/>
<dbReference type="KEGG" id="sbp:Sbal223_2236"/>
<dbReference type="HOGENOM" id="CLU_071608_0_0_6"/>
<dbReference type="UniPathway" id="UPA00185">
    <property type="reaction ID" value="UER00283"/>
</dbReference>
<dbReference type="Proteomes" id="UP000002507">
    <property type="component" value="Chromosome"/>
</dbReference>
<dbReference type="GO" id="GO:0016788">
    <property type="term" value="F:hydrolase activity, acting on ester bonds"/>
    <property type="evidence" value="ECO:0007669"/>
    <property type="project" value="UniProtKB-UniRule"/>
</dbReference>
<dbReference type="GO" id="GO:0009017">
    <property type="term" value="F:succinylglutamate desuccinylase activity"/>
    <property type="evidence" value="ECO:0007669"/>
    <property type="project" value="UniProtKB-EC"/>
</dbReference>
<dbReference type="GO" id="GO:0008270">
    <property type="term" value="F:zinc ion binding"/>
    <property type="evidence" value="ECO:0007669"/>
    <property type="project" value="UniProtKB-UniRule"/>
</dbReference>
<dbReference type="GO" id="GO:0019544">
    <property type="term" value="P:arginine catabolic process to glutamate"/>
    <property type="evidence" value="ECO:0007669"/>
    <property type="project" value="UniProtKB-UniRule"/>
</dbReference>
<dbReference type="GO" id="GO:0019545">
    <property type="term" value="P:arginine catabolic process to succinate"/>
    <property type="evidence" value="ECO:0007669"/>
    <property type="project" value="UniProtKB-UniRule"/>
</dbReference>
<dbReference type="CDD" id="cd03855">
    <property type="entry name" value="M14_ASTE"/>
    <property type="match status" value="1"/>
</dbReference>
<dbReference type="Gene3D" id="3.40.630.10">
    <property type="entry name" value="Zn peptidases"/>
    <property type="match status" value="1"/>
</dbReference>
<dbReference type="HAMAP" id="MF_00767">
    <property type="entry name" value="Arg_catab_AstE"/>
    <property type="match status" value="1"/>
</dbReference>
<dbReference type="InterPro" id="IPR050178">
    <property type="entry name" value="AspA/AstE_fam"/>
</dbReference>
<dbReference type="InterPro" id="IPR055438">
    <property type="entry name" value="AstE_AspA_cat"/>
</dbReference>
<dbReference type="InterPro" id="IPR007036">
    <property type="entry name" value="Aste_AspA_hybrid_dom"/>
</dbReference>
<dbReference type="InterPro" id="IPR016681">
    <property type="entry name" value="SuccinylGlu_desuccinylase"/>
</dbReference>
<dbReference type="NCBIfam" id="TIGR03242">
    <property type="entry name" value="arg_catab_astE"/>
    <property type="match status" value="1"/>
</dbReference>
<dbReference type="NCBIfam" id="NF003706">
    <property type="entry name" value="PRK05324.1"/>
    <property type="match status" value="1"/>
</dbReference>
<dbReference type="PANTHER" id="PTHR15162">
    <property type="entry name" value="ASPARTOACYLASE"/>
    <property type="match status" value="1"/>
</dbReference>
<dbReference type="PANTHER" id="PTHR15162:SF7">
    <property type="entry name" value="SUCCINYLGLUTAMATE DESUCCINYLASE"/>
    <property type="match status" value="1"/>
</dbReference>
<dbReference type="Pfam" id="PF24827">
    <property type="entry name" value="AstE_AspA_cat"/>
    <property type="match status" value="1"/>
</dbReference>
<dbReference type="Pfam" id="PF04952">
    <property type="entry name" value="AstE_AspA_hybrid"/>
    <property type="match status" value="1"/>
</dbReference>
<dbReference type="PIRSF" id="PIRSF017020">
    <property type="entry name" value="AstE"/>
    <property type="match status" value="1"/>
</dbReference>
<dbReference type="SUPFAM" id="SSF53187">
    <property type="entry name" value="Zn-dependent exopeptidases"/>
    <property type="match status" value="1"/>
</dbReference>